<accession>Q8R238</accession>
<accession>Q8VI05</accession>
<gene>
    <name type="primary">Sdsl</name>
    <name type="synonym">Sds</name>
</gene>
<protein>
    <recommendedName>
        <fullName>Serine dehydratase-like</fullName>
    </recommendedName>
    <alternativeName>
        <fullName>Glutamate racemase</fullName>
        <ecNumber evidence="1">5.1.1.3</ecNumber>
    </alternativeName>
    <alternativeName>
        <fullName>L-serine deaminase</fullName>
        <ecNumber evidence="1">4.3.1.17</ecNumber>
    </alternativeName>
    <alternativeName>
        <fullName>L-serine dehydratase/L-threonine deaminase</fullName>
    </alternativeName>
    <alternativeName>
        <fullName>L-threonine dehydratase</fullName>
        <shortName>TDH</shortName>
        <ecNumber evidence="1">4.3.1.19</ecNumber>
    </alternativeName>
    <alternativeName>
        <fullName>SDH</fullName>
    </alternativeName>
</protein>
<sequence>MEGALAERVGAEPFHRVTPLLESWALSQVAGMPVFLKYENVQIAGSFKIRGIGHFCQQMAKRGCRHLVCSSGGNAGIAAAYSARKLGIPVTIVLPEGTSVQVVRRLEGEGAEVQLTGKVWDEANVKAQELATRDGWVNVSPFDHPLIWEGHASLVRELKESLGTPPGAVVLAVGGGGLLAGVTAGLLEVGWQHVPIVAMETRGAHSFNSALQAGRPVTLPDITSVAKSLGAKTVAARTLECAKECEVLSEVVEDREAVSAVQRFLDDERMLVEPACGAALAAIYSGILWRLQAEGRLSSALASVVVIVCGGNNISSQQLQELKIQLGCS</sequence>
<dbReference type="EC" id="5.1.1.3" evidence="1"/>
<dbReference type="EC" id="4.3.1.17" evidence="1"/>
<dbReference type="EC" id="4.3.1.19" evidence="1"/>
<dbReference type="EMBL" id="AF328927">
    <property type="protein sequence ID" value="AAL56988.1"/>
    <property type="status" value="ALT_FRAME"/>
    <property type="molecule type" value="mRNA"/>
</dbReference>
<dbReference type="EMBL" id="BC022601">
    <property type="protein sequence ID" value="AAH22601.1"/>
    <property type="molecule type" value="mRNA"/>
</dbReference>
<dbReference type="CCDS" id="CCDS19618.1"/>
<dbReference type="RefSeq" id="NP_001371183.1">
    <property type="nucleotide sequence ID" value="NM_001384254.1"/>
</dbReference>
<dbReference type="RefSeq" id="NP_598663.2">
    <property type="nucleotide sequence ID" value="NM_133902.2"/>
</dbReference>
<dbReference type="RefSeq" id="XP_011246504.2">
    <property type="nucleotide sequence ID" value="XM_011248202.2"/>
</dbReference>
<dbReference type="RefSeq" id="XP_011246505.1">
    <property type="nucleotide sequence ID" value="XM_011248203.2"/>
</dbReference>
<dbReference type="SMR" id="Q8R238"/>
<dbReference type="BioGRID" id="232990">
    <property type="interactions" value="2"/>
</dbReference>
<dbReference type="FunCoup" id="Q8R238">
    <property type="interactions" value="590"/>
</dbReference>
<dbReference type="STRING" id="10090.ENSMUSP00000031594"/>
<dbReference type="iPTMnet" id="Q8R238"/>
<dbReference type="PhosphoSitePlus" id="Q8R238"/>
<dbReference type="jPOST" id="Q8R238"/>
<dbReference type="PaxDb" id="10090-ENSMUSP00000058198"/>
<dbReference type="PeptideAtlas" id="Q8R238"/>
<dbReference type="ProteomicsDB" id="255508"/>
<dbReference type="Pumba" id="Q8R238"/>
<dbReference type="Antibodypedia" id="31274">
    <property type="antibodies" value="297 antibodies from 26 providers"/>
</dbReference>
<dbReference type="DNASU" id="257635"/>
<dbReference type="Ensembl" id="ENSMUST00000031594.13">
    <property type="protein sequence ID" value="ENSMUSP00000031594.7"/>
    <property type="gene ID" value="ENSMUSG00000029596.14"/>
</dbReference>
<dbReference type="Ensembl" id="ENSMUST00000052258.14">
    <property type="protein sequence ID" value="ENSMUSP00000058198.8"/>
    <property type="gene ID" value="ENSMUSG00000029596.14"/>
</dbReference>
<dbReference type="GeneID" id="257635"/>
<dbReference type="KEGG" id="mmu:257635"/>
<dbReference type="UCSC" id="uc008zhe.1">
    <property type="organism name" value="mouse"/>
</dbReference>
<dbReference type="AGR" id="MGI:2182607"/>
<dbReference type="CTD" id="113675"/>
<dbReference type="MGI" id="MGI:2182607">
    <property type="gene designation" value="Sdsl"/>
</dbReference>
<dbReference type="VEuPathDB" id="HostDB:ENSMUSG00000029596"/>
<dbReference type="eggNOG" id="KOG1250">
    <property type="taxonomic scope" value="Eukaryota"/>
</dbReference>
<dbReference type="GeneTree" id="ENSGT00940000160713"/>
<dbReference type="HOGENOM" id="CLU_021152_3_0_1"/>
<dbReference type="InParanoid" id="Q8R238"/>
<dbReference type="OMA" id="DGWVNIH"/>
<dbReference type="OrthoDB" id="7773036at2759"/>
<dbReference type="PhylomeDB" id="Q8R238"/>
<dbReference type="TreeFam" id="TF329014"/>
<dbReference type="Reactome" id="R-MMU-8849175">
    <property type="pathway name" value="Threonine catabolism"/>
</dbReference>
<dbReference type="BioGRID-ORCS" id="257635">
    <property type="hits" value="2 hits in 77 CRISPR screens"/>
</dbReference>
<dbReference type="ChiTaRS" id="Sdsl">
    <property type="organism name" value="mouse"/>
</dbReference>
<dbReference type="PRO" id="PR:Q8R238"/>
<dbReference type="Proteomes" id="UP000000589">
    <property type="component" value="Chromosome 5"/>
</dbReference>
<dbReference type="RNAct" id="Q8R238">
    <property type="molecule type" value="protein"/>
</dbReference>
<dbReference type="Bgee" id="ENSMUSG00000029596">
    <property type="expression patterns" value="Expressed in ileal epithelium and 135 other cell types or tissues"/>
</dbReference>
<dbReference type="ExpressionAtlas" id="Q8R238">
    <property type="expression patterns" value="baseline and differential"/>
</dbReference>
<dbReference type="GO" id="GO:0005739">
    <property type="term" value="C:mitochondrion"/>
    <property type="evidence" value="ECO:0007005"/>
    <property type="project" value="MGI"/>
</dbReference>
<dbReference type="GO" id="GO:0008881">
    <property type="term" value="F:glutamate racemase activity"/>
    <property type="evidence" value="ECO:0000250"/>
    <property type="project" value="UniProtKB"/>
</dbReference>
<dbReference type="GO" id="GO:0042802">
    <property type="term" value="F:identical protein binding"/>
    <property type="evidence" value="ECO:0007669"/>
    <property type="project" value="Ensembl"/>
</dbReference>
<dbReference type="GO" id="GO:0003941">
    <property type="term" value="F:L-serine ammonia-lyase activity"/>
    <property type="evidence" value="ECO:0007669"/>
    <property type="project" value="UniProtKB-EC"/>
</dbReference>
<dbReference type="GO" id="GO:0030170">
    <property type="term" value="F:pyridoxal phosphate binding"/>
    <property type="evidence" value="ECO:0000250"/>
    <property type="project" value="UniProtKB"/>
</dbReference>
<dbReference type="GO" id="GO:0004794">
    <property type="term" value="F:threonine deaminase activity"/>
    <property type="evidence" value="ECO:0007669"/>
    <property type="project" value="UniProtKB-EC"/>
</dbReference>
<dbReference type="GO" id="GO:0006629">
    <property type="term" value="P:lipid metabolic process"/>
    <property type="evidence" value="ECO:0007669"/>
    <property type="project" value="UniProtKB-KW"/>
</dbReference>
<dbReference type="CDD" id="cd06448">
    <property type="entry name" value="L-Ser-dehyd"/>
    <property type="match status" value="1"/>
</dbReference>
<dbReference type="FunFam" id="3.40.50.1100:FF:000031">
    <property type="entry name" value="L-serine dehydratase/L-threonine deaminase"/>
    <property type="match status" value="1"/>
</dbReference>
<dbReference type="Gene3D" id="3.40.50.1100">
    <property type="match status" value="2"/>
</dbReference>
<dbReference type="InterPro" id="IPR050147">
    <property type="entry name" value="Ser/Thr_Dehydratase"/>
</dbReference>
<dbReference type="InterPro" id="IPR001926">
    <property type="entry name" value="TrpB-like_PALP"/>
</dbReference>
<dbReference type="InterPro" id="IPR036052">
    <property type="entry name" value="TrpB-like_PALP_sf"/>
</dbReference>
<dbReference type="PANTHER" id="PTHR48078:SF16">
    <property type="entry name" value="SERINE DEHYDRATASE-LIKE"/>
    <property type="match status" value="1"/>
</dbReference>
<dbReference type="PANTHER" id="PTHR48078">
    <property type="entry name" value="THREONINE DEHYDRATASE, MITOCHONDRIAL-RELATED"/>
    <property type="match status" value="1"/>
</dbReference>
<dbReference type="Pfam" id="PF00291">
    <property type="entry name" value="PALP"/>
    <property type="match status" value="1"/>
</dbReference>
<dbReference type="SUPFAM" id="SSF53686">
    <property type="entry name" value="Tryptophan synthase beta subunit-like PLP-dependent enzymes"/>
    <property type="match status" value="1"/>
</dbReference>
<comment type="function">
    <text evidence="1">Catalyzes the pyridoxal-phosphate-dependent dehydrative deamination of L-threonine and L-serine to ammonia and alpha-ketobutyrate and pyruvate, respectively. Also exhibits racemase activity towards L-glutamate and D-glutamate.</text>
</comment>
<comment type="catalytic activity">
    <reaction evidence="1">
        <text>L-serine = pyruvate + NH4(+)</text>
        <dbReference type="Rhea" id="RHEA:19169"/>
        <dbReference type="ChEBI" id="CHEBI:15361"/>
        <dbReference type="ChEBI" id="CHEBI:28938"/>
        <dbReference type="ChEBI" id="CHEBI:33384"/>
        <dbReference type="EC" id="4.3.1.17"/>
    </reaction>
</comment>
<comment type="catalytic activity">
    <reaction evidence="1">
        <text>L-threonine = 2-oxobutanoate + NH4(+)</text>
        <dbReference type="Rhea" id="RHEA:22108"/>
        <dbReference type="ChEBI" id="CHEBI:16763"/>
        <dbReference type="ChEBI" id="CHEBI:28938"/>
        <dbReference type="ChEBI" id="CHEBI:57926"/>
        <dbReference type="EC" id="4.3.1.19"/>
    </reaction>
</comment>
<comment type="catalytic activity">
    <reaction evidence="1">
        <text>L-glutamate = D-glutamate</text>
        <dbReference type="Rhea" id="RHEA:12813"/>
        <dbReference type="ChEBI" id="CHEBI:29985"/>
        <dbReference type="ChEBI" id="CHEBI:29986"/>
        <dbReference type="EC" id="5.1.1.3"/>
    </reaction>
    <physiologicalReaction direction="left-to-right" evidence="1">
        <dbReference type="Rhea" id="RHEA:12814"/>
    </physiologicalReaction>
    <physiologicalReaction direction="right-to-left" evidence="1">
        <dbReference type="Rhea" id="RHEA:12815"/>
    </physiologicalReaction>
</comment>
<comment type="cofactor">
    <cofactor evidence="2">
        <name>pyridoxal 5'-phosphate</name>
        <dbReference type="ChEBI" id="CHEBI:597326"/>
    </cofactor>
</comment>
<comment type="subunit">
    <text evidence="1 2">Monomer (By similarity). Homodimer (By similarity).</text>
</comment>
<comment type="tissue specificity">
    <text evidence="3">Abundantly expressed in liver.</text>
</comment>
<comment type="similarity">
    <text evidence="4">Belongs to the serine/threonine dehydratase family.</text>
</comment>
<comment type="sequence caution" evidence="4">
    <conflict type="frameshift">
        <sequence resource="EMBL-CDS" id="AAL56988"/>
    </conflict>
</comment>
<reference key="1">
    <citation type="journal article" date="2002" name="Proc. Natl. Acad. Sci. U.S.A.">
        <title>Positional cloning of the murine flavivirus resistance gene.</title>
        <authorList>
            <person name="Perelygin A.A."/>
            <person name="Scherbik S.V."/>
            <person name="Zhulin I.B."/>
            <person name="Stockman B.M."/>
            <person name="Li Y."/>
            <person name="Brinton M.A."/>
        </authorList>
    </citation>
    <scope>NUCLEOTIDE SEQUENCE [MRNA]</scope>
    <source>
        <strain>C3H/HeJ</strain>
    </source>
</reference>
<reference key="2">
    <citation type="journal article" date="2004" name="Genome Res.">
        <title>The status, quality, and expansion of the NIH full-length cDNA project: the Mammalian Gene Collection (MGC).</title>
        <authorList>
            <consortium name="The MGC Project Team"/>
        </authorList>
    </citation>
    <scope>NUCLEOTIDE SEQUENCE [LARGE SCALE MRNA]</scope>
    <source>
        <strain>FVB/N</strain>
        <tissue>Liver</tissue>
    </source>
</reference>
<reference key="3">
    <citation type="journal article" date="2005" name="BMC Genomics">
        <title>Mice have a transcribed L-threonine aldolase/GLY1 gene, but the human GLY1 gene is a non-processed pseudogene.</title>
        <authorList>
            <person name="Edgar A.J."/>
        </authorList>
    </citation>
    <scope>TISSUE SPECIFICITY</scope>
</reference>
<reference key="4">
    <citation type="journal article" date="2010" name="Cell">
        <title>A tissue-specific atlas of mouse protein phosphorylation and expression.</title>
        <authorList>
            <person name="Huttlin E.L."/>
            <person name="Jedrychowski M.P."/>
            <person name="Elias J.E."/>
            <person name="Goswami T."/>
            <person name="Rad R."/>
            <person name="Beausoleil S.A."/>
            <person name="Villen J."/>
            <person name="Haas W."/>
            <person name="Sowa M.E."/>
            <person name="Gygi S.P."/>
        </authorList>
    </citation>
    <scope>IDENTIFICATION BY MASS SPECTROMETRY [LARGE SCALE ANALYSIS]</scope>
    <source>
        <tissue>Heart</tissue>
        <tissue>Kidney</tissue>
        <tissue>Pancreas</tissue>
        <tissue>Spleen</tissue>
        <tissue>Testis</tissue>
    </source>
</reference>
<feature type="chain" id="PRO_0000264625" description="Serine dehydratase-like">
    <location>
        <begin position="1"/>
        <end position="329"/>
    </location>
</feature>
<feature type="modified residue" description="N-acetylmethionine" evidence="2">
    <location>
        <position position="1"/>
    </location>
</feature>
<feature type="modified residue" description="N6-(pyridoxal phosphate)lysine" evidence="2">
    <location>
        <position position="48"/>
    </location>
</feature>
<name>SDSL_MOUSE</name>
<organism>
    <name type="scientific">Mus musculus</name>
    <name type="common">Mouse</name>
    <dbReference type="NCBI Taxonomy" id="10090"/>
    <lineage>
        <taxon>Eukaryota</taxon>
        <taxon>Metazoa</taxon>
        <taxon>Chordata</taxon>
        <taxon>Craniata</taxon>
        <taxon>Vertebrata</taxon>
        <taxon>Euteleostomi</taxon>
        <taxon>Mammalia</taxon>
        <taxon>Eutheria</taxon>
        <taxon>Euarchontoglires</taxon>
        <taxon>Glires</taxon>
        <taxon>Rodentia</taxon>
        <taxon>Myomorpha</taxon>
        <taxon>Muroidea</taxon>
        <taxon>Muridae</taxon>
        <taxon>Murinae</taxon>
        <taxon>Mus</taxon>
        <taxon>Mus</taxon>
    </lineage>
</organism>
<keyword id="KW-0007">Acetylation</keyword>
<keyword id="KW-0413">Isomerase</keyword>
<keyword id="KW-0443">Lipid metabolism</keyword>
<keyword id="KW-0456">Lyase</keyword>
<keyword id="KW-0663">Pyridoxal phosphate</keyword>
<keyword id="KW-1185">Reference proteome</keyword>
<proteinExistence type="evidence at protein level"/>
<evidence type="ECO:0000250" key="1">
    <source>
        <dbReference type="UniProtKB" id="A0A6N3IN21"/>
    </source>
</evidence>
<evidence type="ECO:0000250" key="2">
    <source>
        <dbReference type="UniProtKB" id="Q96GA7"/>
    </source>
</evidence>
<evidence type="ECO:0000269" key="3">
    <source>
    </source>
</evidence>
<evidence type="ECO:0000305" key="4"/>